<comment type="function">
    <text evidence="3">Facilitates virus release from intestinal cells in vitro, possibly through the host autophagic pathway.</text>
</comment>
<comment type="subcellular location">
    <subcellularLocation>
        <location evidence="3">Host cytoplasmic vesicle membrane</location>
        <topology evidence="1">Single-pass membrane protein</topology>
    </subcellularLocation>
</comment>
<proteinExistence type="evidence at protein level"/>
<organism>
    <name type="scientific">Human enterovirus 71 (strain USA/BrCr/1970)</name>
    <name type="common">EV71</name>
    <name type="synonym">EV-71</name>
    <dbReference type="NCBI Taxonomy" id="69153"/>
    <lineage>
        <taxon>Viruses</taxon>
        <taxon>Riboviria</taxon>
        <taxon>Orthornavirae</taxon>
        <taxon>Pisuviricota</taxon>
        <taxon>Pisoniviricetes</taxon>
        <taxon>Picornavirales</taxon>
        <taxon>Picornaviridae</taxon>
        <taxon>Ensavirinae</taxon>
        <taxon>Enterovirus</taxon>
        <taxon>Enterovirus A</taxon>
    </lineage>
</organism>
<name>ORF2P_HE71B</name>
<keyword id="KW-1036">Host cytoplasmic vesicle</keyword>
<keyword id="KW-1043">Host membrane</keyword>
<keyword id="KW-0472">Membrane</keyword>
<keyword id="KW-0812">Transmembrane</keyword>
<keyword id="KW-1133">Transmembrane helix</keyword>
<reference key="1">
    <citation type="journal article" date="1995" name="Virus Res.">
        <title>Complete nucleotide sequence of enterovirus 71 is distinct from poliovirus.</title>
        <authorList>
            <person name="Brown B.A."/>
            <person name="Pallansch M.A."/>
        </authorList>
    </citation>
    <scope>NUCLEOTIDE SEQUENCE [GENOMIC RNA]</scope>
</reference>
<reference key="2">
    <citation type="journal article" date="2019" name="Nat. Commun.">
        <title>A second open reading frame in human enterovirus determines viral replication in intestinal epithelial cells.</title>
        <authorList>
            <person name="Guo H."/>
            <person name="Li Y."/>
            <person name="Liu G."/>
            <person name="Jiang Y."/>
            <person name="Shen S."/>
            <person name="Bi R."/>
            <person name="Huang H."/>
            <person name="Cheng T."/>
            <person name="Wang C."/>
            <person name="Wei W."/>
        </authorList>
    </citation>
    <scope>IDENTIFICATION</scope>
    <scope>FUNCTION</scope>
    <scope>SUBCELLULAR LOCATION</scope>
    <scope>MUTAGENESIS OF TYR-25; GLY-29 AND PRO-32</scope>
</reference>
<organismHost>
    <name type="scientific">Homo sapiens</name>
    <name type="common">Human</name>
    <dbReference type="NCBI Taxonomy" id="9606"/>
</organismHost>
<accession>P0DTB4</accession>
<sequence length="75" mass="8712">MVTIKELLPYSYWIGHPVSNRAIVYLFVGFTPLTLETLHTLNYIILLNTKRWAPRSPHSDPARMRIPTQPRKAPL</sequence>
<dbReference type="EMBL" id="U22521">
    <property type="status" value="NOT_ANNOTATED_CDS"/>
    <property type="molecule type" value="Genomic_RNA"/>
</dbReference>
<dbReference type="Proteomes" id="UP000007709">
    <property type="component" value="Segment"/>
</dbReference>
<dbReference type="GO" id="GO:0044162">
    <property type="term" value="C:host cell cytoplasmic vesicle membrane"/>
    <property type="evidence" value="ECO:0007669"/>
    <property type="project" value="UniProtKB-SubCell"/>
</dbReference>
<dbReference type="GO" id="GO:0016020">
    <property type="term" value="C:membrane"/>
    <property type="evidence" value="ECO:0007669"/>
    <property type="project" value="UniProtKB-KW"/>
</dbReference>
<feature type="chain" id="PRO_0000449069" description="ORF2p protein">
    <location>
        <begin position="1"/>
        <end position="75"/>
    </location>
</feature>
<feature type="transmembrane region" evidence="1">
    <location>
        <begin position="23"/>
        <end position="45"/>
    </location>
</feature>
<feature type="region of interest" description="Important for viral replication in intestinal cells" evidence="3">
    <location>
        <begin position="13"/>
        <end position="18"/>
    </location>
</feature>
<feature type="region of interest" description="Disordered" evidence="2">
    <location>
        <begin position="53"/>
        <end position="75"/>
    </location>
</feature>
<feature type="mutagenesis site" description="Decreased virus yield; when associated with A-29 and A-32." evidence="3">
    <original>Y</original>
    <variation>A</variation>
    <location>
        <position position="25"/>
    </location>
</feature>
<feature type="mutagenesis site" description="Decreased virus yield; when associated with A-25 and A-32." evidence="3">
    <original>G</original>
    <variation>A</variation>
    <location>
        <position position="29"/>
    </location>
</feature>
<feature type="mutagenesis site" description="Decreased virus yield; when associated with A-25 and A-29." evidence="3">
    <original>P</original>
    <variation>A</variation>
    <location>
        <position position="32"/>
    </location>
</feature>
<evidence type="ECO:0000255" key="1"/>
<evidence type="ECO:0000256" key="2">
    <source>
        <dbReference type="SAM" id="MobiDB-lite"/>
    </source>
</evidence>
<evidence type="ECO:0000269" key="3">
    <source>
    </source>
</evidence>
<protein>
    <recommendedName>
        <fullName>ORF2p protein</fullName>
    </recommendedName>
</protein>